<dbReference type="EC" id="4.2.2.3" evidence="1"/>
<dbReference type="EMBL" id="CT573326">
    <property type="protein sequence ID" value="CAK17222.1"/>
    <property type="molecule type" value="Genomic_DNA"/>
</dbReference>
<dbReference type="RefSeq" id="WP_011535590.1">
    <property type="nucleotide sequence ID" value="NC_008027.1"/>
</dbReference>
<dbReference type="SMR" id="Q1I563"/>
<dbReference type="STRING" id="384676.PSEEN4542"/>
<dbReference type="CAZy" id="PL5">
    <property type="family name" value="Polysaccharide Lyase Family 5"/>
</dbReference>
<dbReference type="GeneID" id="32807536"/>
<dbReference type="KEGG" id="pen:PSEEN4542"/>
<dbReference type="eggNOG" id="ENOG502ZAMJ">
    <property type="taxonomic scope" value="Bacteria"/>
</dbReference>
<dbReference type="HOGENOM" id="CLU_064286_0_0_6"/>
<dbReference type="OrthoDB" id="6972889at2"/>
<dbReference type="Proteomes" id="UP000000658">
    <property type="component" value="Chromosome"/>
</dbReference>
<dbReference type="GO" id="GO:0042597">
    <property type="term" value="C:periplasmic space"/>
    <property type="evidence" value="ECO:0007669"/>
    <property type="project" value="UniProtKB-SubCell"/>
</dbReference>
<dbReference type="GO" id="GO:0045135">
    <property type="term" value="F:poly(beta-D-mannuronate) lyase activity"/>
    <property type="evidence" value="ECO:0007669"/>
    <property type="project" value="UniProtKB-UniRule"/>
</dbReference>
<dbReference type="GO" id="GO:0042122">
    <property type="term" value="P:alginic acid catabolic process"/>
    <property type="evidence" value="ECO:0007669"/>
    <property type="project" value="UniProtKB-UniRule"/>
</dbReference>
<dbReference type="CDD" id="cd00244">
    <property type="entry name" value="AlgLyase"/>
    <property type="match status" value="1"/>
</dbReference>
<dbReference type="Gene3D" id="1.50.10.100">
    <property type="entry name" value="Chondroitin AC/alginate lyase"/>
    <property type="match status" value="1"/>
</dbReference>
<dbReference type="HAMAP" id="MF_00557">
    <property type="entry name" value="Alginate_lyase"/>
    <property type="match status" value="1"/>
</dbReference>
<dbReference type="InterPro" id="IPR022859">
    <property type="entry name" value="Alginate_lyase"/>
</dbReference>
<dbReference type="InterPro" id="IPR008397">
    <property type="entry name" value="Alginate_lyase_dom"/>
</dbReference>
<dbReference type="InterPro" id="IPR008929">
    <property type="entry name" value="Chondroitin_lyas"/>
</dbReference>
<dbReference type="NCBIfam" id="NF001467">
    <property type="entry name" value="PRK00325.1-2"/>
    <property type="match status" value="1"/>
</dbReference>
<dbReference type="NCBIfam" id="NF001470">
    <property type="entry name" value="PRK00325.1-5"/>
    <property type="match status" value="1"/>
</dbReference>
<dbReference type="Pfam" id="PF05426">
    <property type="entry name" value="Alginate_lyase"/>
    <property type="match status" value="1"/>
</dbReference>
<dbReference type="SUPFAM" id="SSF48230">
    <property type="entry name" value="Chondroitin AC/alginate lyase"/>
    <property type="match status" value="1"/>
</dbReference>
<reference key="1">
    <citation type="journal article" date="2006" name="Nat. Biotechnol.">
        <title>Complete genome sequence of the entomopathogenic and metabolically versatile soil bacterium Pseudomonas entomophila.</title>
        <authorList>
            <person name="Vodovar N."/>
            <person name="Vallenet D."/>
            <person name="Cruveiller S."/>
            <person name="Rouy Z."/>
            <person name="Barbe V."/>
            <person name="Acosta C."/>
            <person name="Cattolico L."/>
            <person name="Jubin C."/>
            <person name="Lajus A."/>
            <person name="Segurens B."/>
            <person name="Vacherie B."/>
            <person name="Wincker P."/>
            <person name="Weissenbach J."/>
            <person name="Lemaitre B."/>
            <person name="Medigue C."/>
            <person name="Boccard F."/>
        </authorList>
    </citation>
    <scope>NUCLEOTIDE SEQUENCE [LARGE SCALE GENOMIC DNA]</scope>
    <source>
        <strain>L48</strain>
    </source>
</reference>
<protein>
    <recommendedName>
        <fullName evidence="1">Alginate lyase</fullName>
        <ecNumber evidence="1">4.2.2.3</ecNumber>
    </recommendedName>
    <alternativeName>
        <fullName evidence="1">Poly(beta-D-mannuronate) lyase</fullName>
    </alternativeName>
</protein>
<evidence type="ECO:0000255" key="1">
    <source>
        <dbReference type="HAMAP-Rule" id="MF_00557"/>
    </source>
</evidence>
<comment type="function">
    <text evidence="1">Catalyzes the depolymerization of alginate by cleaving the beta-1,4 glycosidic bond between two adjacent sugar residues via a beta-elimination mechanism. May serve to degrade mislocalized alginate that is trapped in the periplasmic space.</text>
</comment>
<comment type="catalytic activity">
    <reaction evidence="1">
        <text>Eliminative cleavage of alginate to give oligosaccharides with 4-deoxy-alpha-L-erythro-hex-4-enuronosyl groups at their non-reducing ends and beta-D-mannuronate at their reducing end.</text>
        <dbReference type="EC" id="4.2.2.3"/>
    </reaction>
</comment>
<comment type="subcellular location">
    <subcellularLocation>
        <location evidence="1">Periplasm</location>
    </subcellularLocation>
</comment>
<comment type="similarity">
    <text evidence="1">Belongs to the polysaccharide lyase 5 family.</text>
</comment>
<gene>
    <name evidence="1" type="primary">algL</name>
    <name type="ordered locus">PSEEN4542</name>
</gene>
<feature type="signal peptide" evidence="1">
    <location>
        <begin position="1"/>
        <end position="24"/>
    </location>
</feature>
<feature type="chain" id="PRO_1000061111" description="Alginate lyase">
    <location>
        <begin position="25"/>
        <end position="367"/>
    </location>
</feature>
<feature type="binding site" evidence="1">
    <location>
        <begin position="63"/>
        <end position="64"/>
    </location>
    <ligand>
        <name>substrate</name>
    </ligand>
</feature>
<feature type="binding site" evidence="1">
    <location>
        <begin position="136"/>
        <end position="137"/>
    </location>
    <ligand>
        <name>substrate</name>
    </ligand>
</feature>
<feature type="binding site" evidence="1">
    <location>
        <position position="254"/>
    </location>
    <ligand>
        <name>substrate</name>
    </ligand>
</feature>
<keyword id="KW-0456">Lyase</keyword>
<keyword id="KW-0574">Periplasm</keyword>
<keyword id="KW-0732">Signal</keyword>
<proteinExistence type="inferred from homology"/>
<organism>
    <name type="scientific">Pseudomonas entomophila (strain L48)</name>
    <dbReference type="NCBI Taxonomy" id="384676"/>
    <lineage>
        <taxon>Bacteria</taxon>
        <taxon>Pseudomonadati</taxon>
        <taxon>Pseudomonadota</taxon>
        <taxon>Gammaproteobacteria</taxon>
        <taxon>Pseudomonadales</taxon>
        <taxon>Pseudomonadaceae</taxon>
        <taxon>Pseudomonas</taxon>
    </lineage>
</organism>
<accession>Q1I563</accession>
<name>ALGL_PSEE4</name>
<sequence>MTIINRKTAPALLALALFGGAAQAALVPPQGYYEGIEKLKSSDGDFRCEAAPRPYTGSLRFRSKYEGSDKARATLNVASEKAFRASTKDITTLEKGVSKMVGQYMRDGRPAQLDCALTWLGTWARADALMSSDYNHTGKSMRKWALGSMSGSWLRLKFSNSQPLAAHQAEAEQIEKWFARLAQQTVRDWSGLPLEKINNHSYWAAWSVMATAVATDRRDLFDWAVKEYKVGANQVDEQGFLPNELKRRQRALAYHNYALPPLAMIASFAQANGVDLRKENNFALQRLGEGVLAGARDPSQFTAHAGVKQDLHDLKIDSKYAWLEPWCALYHCVGDTLERKHDMQPFDSFRLGGDVTRVYDPGAESKK</sequence>